<sequence>MAKDIEYNETARRKLLEGVNKLANAVKVTLGPKGRNVVIDKKFGAPTITKDGVTVAKEIELEDPLENMGAQMVKEVSTKTNDVAGDGTTTATILAQSIINEGLKNVTAGANPMSLKKGIDKAVTAAVESIQKRAVKIENKKDIANVASISANNDNTIGNLIADAMDKVGKDGVITVEEAKSIETTLDVVEGMQFDRGYISPYMVTDAESMVATLNDPFILIYDKKISSMKDLIHILEKVAQAGKPLVIISEEVEGEALATIVVNTLRKTISCVAVKAPGFGDRRKSMLEDIAILTGGQVISEDLGMKLENTTLQMLGRANKVTVDKENTTIIEGKGQTKEIQGRIGQIKKQIEDTTSEYDREKLQERLAKLAGGVAVIHVGAATEVEMKEKKARVEDALSATRAAVEEGIVPGGGLTLLKAQEAVGSLKLDGDEATGAKIIFRALEEPIRMITSNAGLEGSVIVEHAKAKKGNEGFNALTMVWEDMIQAGVVDPAKVVRSALQNAASIGSMILTTEVTITDKPDKDAPNPMAGMGGGGMGGMGGMM</sequence>
<evidence type="ECO:0000255" key="1">
    <source>
        <dbReference type="HAMAP-Rule" id="MF_00600"/>
    </source>
</evidence>
<name>CH60_LEPIC</name>
<gene>
    <name evidence="1" type="primary">groEL</name>
    <name evidence="1" type="synonym">groL</name>
    <name type="synonym">hsp58</name>
    <name type="synonym">mopA</name>
    <name type="ordered locus">LIC_11335</name>
</gene>
<proteinExistence type="evidence at transcript level"/>
<comment type="function">
    <text evidence="1">Together with its co-chaperonin GroES, plays an essential role in assisting protein folding. The GroEL-GroES system forms a nano-cage that allows encapsulation of the non-native substrate proteins and provides a physical environment optimized to promote and accelerate protein folding.</text>
</comment>
<comment type="catalytic activity">
    <reaction evidence="1">
        <text>ATP + H2O + a folded polypeptide = ADP + phosphate + an unfolded polypeptide.</text>
        <dbReference type="EC" id="5.6.1.7"/>
    </reaction>
</comment>
<comment type="subunit">
    <text evidence="1">Forms a cylinder of 14 subunits composed of two heptameric rings stacked back-to-back. Interacts with the co-chaperonin GroES.</text>
</comment>
<comment type="subcellular location">
    <subcellularLocation>
        <location evidence="1">Cytoplasm</location>
    </subcellularLocation>
</comment>
<comment type="induction">
    <text>By heat shock.</text>
</comment>
<comment type="similarity">
    <text evidence="1">Belongs to the chaperonin (HSP60) family.</text>
</comment>
<organism>
    <name type="scientific">Leptospira interrogans serogroup Icterohaemorrhagiae serovar copenhageni (strain Fiocruz L1-130)</name>
    <dbReference type="NCBI Taxonomy" id="267671"/>
    <lineage>
        <taxon>Bacteria</taxon>
        <taxon>Pseudomonadati</taxon>
        <taxon>Spirochaetota</taxon>
        <taxon>Spirochaetia</taxon>
        <taxon>Leptospirales</taxon>
        <taxon>Leptospiraceae</taxon>
        <taxon>Leptospira</taxon>
    </lineage>
</organism>
<keyword id="KW-0067">ATP-binding</keyword>
<keyword id="KW-0143">Chaperone</keyword>
<keyword id="KW-0963">Cytoplasm</keyword>
<keyword id="KW-0413">Isomerase</keyword>
<keyword id="KW-0547">Nucleotide-binding</keyword>
<keyword id="KW-0346">Stress response</keyword>
<protein>
    <recommendedName>
        <fullName evidence="1">Chaperonin GroEL</fullName>
        <ecNumber evidence="1">5.6.1.7</ecNumber>
    </recommendedName>
    <alternativeName>
        <fullName evidence="1">60 kDa chaperonin</fullName>
    </alternativeName>
    <alternativeName>
        <fullName evidence="1">Chaperonin-60</fullName>
        <shortName evidence="1">Cpn60</shortName>
    </alternativeName>
</protein>
<feature type="chain" id="PRO_0000063410" description="Chaperonin GroEL">
    <location>
        <begin position="1"/>
        <end position="546"/>
    </location>
</feature>
<feature type="binding site" evidence="1">
    <location>
        <begin position="29"/>
        <end position="32"/>
    </location>
    <ligand>
        <name>ATP</name>
        <dbReference type="ChEBI" id="CHEBI:30616"/>
    </ligand>
</feature>
<feature type="binding site" evidence="1">
    <location>
        <position position="50"/>
    </location>
    <ligand>
        <name>ATP</name>
        <dbReference type="ChEBI" id="CHEBI:30616"/>
    </ligand>
</feature>
<feature type="binding site" evidence="1">
    <location>
        <begin position="86"/>
        <end position="90"/>
    </location>
    <ligand>
        <name>ATP</name>
        <dbReference type="ChEBI" id="CHEBI:30616"/>
    </ligand>
</feature>
<feature type="binding site" evidence="1">
    <location>
        <position position="414"/>
    </location>
    <ligand>
        <name>ATP</name>
        <dbReference type="ChEBI" id="CHEBI:30616"/>
    </ligand>
</feature>
<feature type="binding site" evidence="1">
    <location>
        <begin position="477"/>
        <end position="479"/>
    </location>
    <ligand>
        <name>ATP</name>
        <dbReference type="ChEBI" id="CHEBI:30616"/>
    </ligand>
</feature>
<feature type="binding site" evidence="1">
    <location>
        <position position="493"/>
    </location>
    <ligand>
        <name>ATP</name>
        <dbReference type="ChEBI" id="CHEBI:30616"/>
    </ligand>
</feature>
<accession>P61438</accession>
<accession>O31198</accession>
<accession>P35468</accession>
<dbReference type="EC" id="5.6.1.7" evidence="1"/>
<dbReference type="EMBL" id="L14682">
    <property type="protein sequence ID" value="AAA71992.1"/>
    <property type="molecule type" value="Genomic_DNA"/>
</dbReference>
<dbReference type="EMBL" id="AE016823">
    <property type="protein sequence ID" value="AAS69936.1"/>
    <property type="molecule type" value="Genomic_DNA"/>
</dbReference>
<dbReference type="PIR" id="S34938">
    <property type="entry name" value="S34938"/>
</dbReference>
<dbReference type="RefSeq" id="WP_001029963.1">
    <property type="nucleotide sequence ID" value="NC_005823.1"/>
</dbReference>
<dbReference type="SMR" id="P61438"/>
<dbReference type="GeneID" id="61144644"/>
<dbReference type="KEGG" id="lic:LIC_11335"/>
<dbReference type="HOGENOM" id="CLU_016503_3_0_12"/>
<dbReference type="Proteomes" id="UP000007037">
    <property type="component" value="Chromosome I"/>
</dbReference>
<dbReference type="GO" id="GO:0005737">
    <property type="term" value="C:cytoplasm"/>
    <property type="evidence" value="ECO:0007669"/>
    <property type="project" value="UniProtKB-SubCell"/>
</dbReference>
<dbReference type="GO" id="GO:0005524">
    <property type="term" value="F:ATP binding"/>
    <property type="evidence" value="ECO:0007669"/>
    <property type="project" value="UniProtKB-UniRule"/>
</dbReference>
<dbReference type="GO" id="GO:0140662">
    <property type="term" value="F:ATP-dependent protein folding chaperone"/>
    <property type="evidence" value="ECO:0007669"/>
    <property type="project" value="InterPro"/>
</dbReference>
<dbReference type="GO" id="GO:0016853">
    <property type="term" value="F:isomerase activity"/>
    <property type="evidence" value="ECO:0007669"/>
    <property type="project" value="UniProtKB-KW"/>
</dbReference>
<dbReference type="GO" id="GO:0051082">
    <property type="term" value="F:unfolded protein binding"/>
    <property type="evidence" value="ECO:0007669"/>
    <property type="project" value="UniProtKB-UniRule"/>
</dbReference>
<dbReference type="GO" id="GO:0042026">
    <property type="term" value="P:protein refolding"/>
    <property type="evidence" value="ECO:0007669"/>
    <property type="project" value="UniProtKB-UniRule"/>
</dbReference>
<dbReference type="CDD" id="cd03344">
    <property type="entry name" value="GroEL"/>
    <property type="match status" value="1"/>
</dbReference>
<dbReference type="FunFam" id="3.50.7.10:FF:000001">
    <property type="entry name" value="60 kDa chaperonin"/>
    <property type="match status" value="1"/>
</dbReference>
<dbReference type="Gene3D" id="3.50.7.10">
    <property type="entry name" value="GroEL"/>
    <property type="match status" value="1"/>
</dbReference>
<dbReference type="Gene3D" id="1.10.560.10">
    <property type="entry name" value="GroEL-like equatorial domain"/>
    <property type="match status" value="1"/>
</dbReference>
<dbReference type="Gene3D" id="3.30.260.10">
    <property type="entry name" value="TCP-1-like chaperonin intermediate domain"/>
    <property type="match status" value="1"/>
</dbReference>
<dbReference type="HAMAP" id="MF_00600">
    <property type="entry name" value="CH60"/>
    <property type="match status" value="1"/>
</dbReference>
<dbReference type="InterPro" id="IPR018370">
    <property type="entry name" value="Chaperonin_Cpn60_CS"/>
</dbReference>
<dbReference type="InterPro" id="IPR001844">
    <property type="entry name" value="Cpn60/GroEL"/>
</dbReference>
<dbReference type="InterPro" id="IPR002423">
    <property type="entry name" value="Cpn60/GroEL/TCP-1"/>
</dbReference>
<dbReference type="InterPro" id="IPR027409">
    <property type="entry name" value="GroEL-like_apical_dom_sf"/>
</dbReference>
<dbReference type="InterPro" id="IPR027413">
    <property type="entry name" value="GROEL-like_equatorial_sf"/>
</dbReference>
<dbReference type="InterPro" id="IPR027410">
    <property type="entry name" value="TCP-1-like_intermed_sf"/>
</dbReference>
<dbReference type="NCBIfam" id="TIGR02348">
    <property type="entry name" value="GroEL"/>
    <property type="match status" value="1"/>
</dbReference>
<dbReference type="NCBIfam" id="NF000592">
    <property type="entry name" value="PRK00013.1"/>
    <property type="match status" value="1"/>
</dbReference>
<dbReference type="NCBIfam" id="NF009487">
    <property type="entry name" value="PRK12849.1"/>
    <property type="match status" value="1"/>
</dbReference>
<dbReference type="NCBIfam" id="NF009488">
    <property type="entry name" value="PRK12850.1"/>
    <property type="match status" value="1"/>
</dbReference>
<dbReference type="NCBIfam" id="NF009489">
    <property type="entry name" value="PRK12851.1"/>
    <property type="match status" value="1"/>
</dbReference>
<dbReference type="PANTHER" id="PTHR45633">
    <property type="entry name" value="60 KDA HEAT SHOCK PROTEIN, MITOCHONDRIAL"/>
    <property type="match status" value="1"/>
</dbReference>
<dbReference type="Pfam" id="PF00118">
    <property type="entry name" value="Cpn60_TCP1"/>
    <property type="match status" value="1"/>
</dbReference>
<dbReference type="PRINTS" id="PR00298">
    <property type="entry name" value="CHAPERONIN60"/>
</dbReference>
<dbReference type="SUPFAM" id="SSF52029">
    <property type="entry name" value="GroEL apical domain-like"/>
    <property type="match status" value="1"/>
</dbReference>
<dbReference type="SUPFAM" id="SSF48592">
    <property type="entry name" value="GroEL equatorial domain-like"/>
    <property type="match status" value="1"/>
</dbReference>
<dbReference type="SUPFAM" id="SSF54849">
    <property type="entry name" value="GroEL-intermediate domain like"/>
    <property type="match status" value="1"/>
</dbReference>
<dbReference type="PROSITE" id="PS00296">
    <property type="entry name" value="CHAPERONINS_CPN60"/>
    <property type="match status" value="1"/>
</dbReference>
<reference key="1">
    <citation type="journal article" date="1993" name="Mol. Microbiol.">
        <title>Molecular analysis of the hsp (groE) operon of Leptospira interrogans serovar copenhageni.</title>
        <authorList>
            <person name="Ballard S.A."/>
            <person name="Segers R.P."/>
            <person name="Bleumink-Pluym N.M."/>
            <person name="Fyfe J.A.M."/>
            <person name="Faine S."/>
            <person name="Adler B."/>
        </authorList>
    </citation>
    <scope>NUCLEOTIDE SEQUENCE [GENOMIC DNA]</scope>
    <source>
        <strain>Wijnberg</strain>
    </source>
</reference>
<reference key="2">
    <citation type="journal article" date="2004" name="J. Bacteriol.">
        <title>Comparative genomics of two Leptospira interrogans serovars reveals novel insights into physiology and pathogenesis.</title>
        <authorList>
            <person name="Nascimento A.L.T.O."/>
            <person name="Ko A.I."/>
            <person name="Martins E.A.L."/>
            <person name="Monteiro-Vitorello C.B."/>
            <person name="Ho P.L."/>
            <person name="Haake D.A."/>
            <person name="Verjovski-Almeida S."/>
            <person name="Hartskeerl R.A."/>
            <person name="Marques M.V."/>
            <person name="Oliveira M.C."/>
            <person name="Menck C.F.M."/>
            <person name="Leite L.C.C."/>
            <person name="Carrer H."/>
            <person name="Coutinho L.L."/>
            <person name="Degrave W.M."/>
            <person name="Dellagostin O.A."/>
            <person name="El-Dorry H."/>
            <person name="Ferro E.S."/>
            <person name="Ferro M.I.T."/>
            <person name="Furlan L.R."/>
            <person name="Gamberini M."/>
            <person name="Giglioti E.A."/>
            <person name="Goes-Neto A."/>
            <person name="Goldman G.H."/>
            <person name="Goldman M.H.S."/>
            <person name="Harakava R."/>
            <person name="Jeronimo S.M.B."/>
            <person name="Junqueira-de-Azevedo I.L.M."/>
            <person name="Kimura E.T."/>
            <person name="Kuramae E.E."/>
            <person name="Lemos E.G.M."/>
            <person name="Lemos M.V.F."/>
            <person name="Marino C.L."/>
            <person name="Nunes L.R."/>
            <person name="de Oliveira R.C."/>
            <person name="Pereira G.G."/>
            <person name="Reis M.S."/>
            <person name="Schriefer A."/>
            <person name="Siqueira W.J."/>
            <person name="Sommer P."/>
            <person name="Tsai S.M."/>
            <person name="Simpson A.J.G."/>
            <person name="Ferro J.A."/>
            <person name="Camargo L.E.A."/>
            <person name="Kitajima J.P."/>
            <person name="Setubal J.C."/>
            <person name="Van Sluys M.A."/>
        </authorList>
    </citation>
    <scope>NUCLEOTIDE SEQUENCE [LARGE SCALE GENOMIC DNA]</scope>
    <source>
        <strain>Fiocruz L1-130</strain>
    </source>
</reference>